<name>RSMG_PARDP</name>
<feature type="chain" id="PRO_1000071198" description="Ribosomal RNA small subunit methyltransferase G">
    <location>
        <begin position="1"/>
        <end position="193"/>
    </location>
</feature>
<feature type="binding site" evidence="1">
    <location>
        <position position="61"/>
    </location>
    <ligand>
        <name>S-adenosyl-L-methionine</name>
        <dbReference type="ChEBI" id="CHEBI:59789"/>
    </ligand>
</feature>
<feature type="binding site" evidence="1">
    <location>
        <position position="66"/>
    </location>
    <ligand>
        <name>S-adenosyl-L-methionine</name>
        <dbReference type="ChEBI" id="CHEBI:59789"/>
    </ligand>
</feature>
<feature type="binding site" evidence="1">
    <location>
        <begin position="112"/>
        <end position="113"/>
    </location>
    <ligand>
        <name>S-adenosyl-L-methionine</name>
        <dbReference type="ChEBI" id="CHEBI:59789"/>
    </ligand>
</feature>
<feature type="binding site" evidence="1">
    <location>
        <position position="126"/>
    </location>
    <ligand>
        <name>S-adenosyl-L-methionine</name>
        <dbReference type="ChEBI" id="CHEBI:59789"/>
    </ligand>
</feature>
<keyword id="KW-0963">Cytoplasm</keyword>
<keyword id="KW-0489">Methyltransferase</keyword>
<keyword id="KW-1185">Reference proteome</keyword>
<keyword id="KW-0698">rRNA processing</keyword>
<keyword id="KW-0949">S-adenosyl-L-methionine</keyword>
<keyword id="KW-0808">Transferase</keyword>
<comment type="function">
    <text evidence="1">Specifically methylates the N7 position of guanine in position 527 of 16S rRNA.</text>
</comment>
<comment type="catalytic activity">
    <reaction evidence="1">
        <text>guanosine(527) in 16S rRNA + S-adenosyl-L-methionine = N(7)-methylguanosine(527) in 16S rRNA + S-adenosyl-L-homocysteine</text>
        <dbReference type="Rhea" id="RHEA:42732"/>
        <dbReference type="Rhea" id="RHEA-COMP:10209"/>
        <dbReference type="Rhea" id="RHEA-COMP:10210"/>
        <dbReference type="ChEBI" id="CHEBI:57856"/>
        <dbReference type="ChEBI" id="CHEBI:59789"/>
        <dbReference type="ChEBI" id="CHEBI:74269"/>
        <dbReference type="ChEBI" id="CHEBI:74480"/>
        <dbReference type="EC" id="2.1.1.170"/>
    </reaction>
</comment>
<comment type="subcellular location">
    <subcellularLocation>
        <location evidence="1">Cytoplasm</location>
    </subcellularLocation>
</comment>
<comment type="similarity">
    <text evidence="1">Belongs to the methyltransferase superfamily. RNA methyltransferase RsmG family.</text>
</comment>
<accession>A1AXX8</accession>
<organism>
    <name type="scientific">Paracoccus denitrificans (strain Pd 1222)</name>
    <dbReference type="NCBI Taxonomy" id="318586"/>
    <lineage>
        <taxon>Bacteria</taxon>
        <taxon>Pseudomonadati</taxon>
        <taxon>Pseudomonadota</taxon>
        <taxon>Alphaproteobacteria</taxon>
        <taxon>Rhodobacterales</taxon>
        <taxon>Paracoccaceae</taxon>
        <taxon>Paracoccus</taxon>
    </lineage>
</organism>
<proteinExistence type="inferred from homology"/>
<reference key="1">
    <citation type="submission" date="2006-12" db="EMBL/GenBank/DDBJ databases">
        <title>Complete sequence of chromosome 1 of Paracoccus denitrificans PD1222.</title>
        <authorList>
            <person name="Copeland A."/>
            <person name="Lucas S."/>
            <person name="Lapidus A."/>
            <person name="Barry K."/>
            <person name="Detter J.C."/>
            <person name="Glavina del Rio T."/>
            <person name="Hammon N."/>
            <person name="Israni S."/>
            <person name="Dalin E."/>
            <person name="Tice H."/>
            <person name="Pitluck S."/>
            <person name="Munk A.C."/>
            <person name="Brettin T."/>
            <person name="Bruce D."/>
            <person name="Han C."/>
            <person name="Tapia R."/>
            <person name="Gilna P."/>
            <person name="Schmutz J."/>
            <person name="Larimer F."/>
            <person name="Land M."/>
            <person name="Hauser L."/>
            <person name="Kyrpides N."/>
            <person name="Lykidis A."/>
            <person name="Spiro S."/>
            <person name="Richardson D.J."/>
            <person name="Moir J.W.B."/>
            <person name="Ferguson S.J."/>
            <person name="van Spanning R.J.M."/>
            <person name="Richardson P."/>
        </authorList>
    </citation>
    <scope>NUCLEOTIDE SEQUENCE [LARGE SCALE GENOMIC DNA]</scope>
    <source>
        <strain>Pd 1222</strain>
    </source>
</reference>
<dbReference type="EC" id="2.1.1.170" evidence="1"/>
<dbReference type="EMBL" id="CP000489">
    <property type="protein sequence ID" value="ABL68122.1"/>
    <property type="molecule type" value="Genomic_DNA"/>
</dbReference>
<dbReference type="RefSeq" id="WP_011746355.1">
    <property type="nucleotide sequence ID" value="NC_008686.1"/>
</dbReference>
<dbReference type="SMR" id="A1AXX8"/>
<dbReference type="STRING" id="318586.Pden_0005"/>
<dbReference type="EnsemblBacteria" id="ABL68122">
    <property type="protein sequence ID" value="ABL68122"/>
    <property type="gene ID" value="Pden_0005"/>
</dbReference>
<dbReference type="GeneID" id="93451236"/>
<dbReference type="KEGG" id="pde:Pden_0005"/>
<dbReference type="eggNOG" id="COG0357">
    <property type="taxonomic scope" value="Bacteria"/>
</dbReference>
<dbReference type="HOGENOM" id="CLU_065341_1_1_5"/>
<dbReference type="OrthoDB" id="9808773at2"/>
<dbReference type="Proteomes" id="UP000000361">
    <property type="component" value="Chromosome 1"/>
</dbReference>
<dbReference type="GO" id="GO:0005829">
    <property type="term" value="C:cytosol"/>
    <property type="evidence" value="ECO:0007669"/>
    <property type="project" value="TreeGrafter"/>
</dbReference>
<dbReference type="GO" id="GO:0070043">
    <property type="term" value="F:rRNA (guanine-N7-)-methyltransferase activity"/>
    <property type="evidence" value="ECO:0007669"/>
    <property type="project" value="UniProtKB-UniRule"/>
</dbReference>
<dbReference type="Gene3D" id="3.40.50.150">
    <property type="entry name" value="Vaccinia Virus protein VP39"/>
    <property type="match status" value="1"/>
</dbReference>
<dbReference type="HAMAP" id="MF_00074">
    <property type="entry name" value="16SrRNA_methyltr_G"/>
    <property type="match status" value="1"/>
</dbReference>
<dbReference type="InterPro" id="IPR003682">
    <property type="entry name" value="rRNA_ssu_MeTfrase_G"/>
</dbReference>
<dbReference type="InterPro" id="IPR029063">
    <property type="entry name" value="SAM-dependent_MTases_sf"/>
</dbReference>
<dbReference type="NCBIfam" id="TIGR00138">
    <property type="entry name" value="rsmG_gidB"/>
    <property type="match status" value="1"/>
</dbReference>
<dbReference type="PANTHER" id="PTHR31760">
    <property type="entry name" value="S-ADENOSYL-L-METHIONINE-DEPENDENT METHYLTRANSFERASES SUPERFAMILY PROTEIN"/>
    <property type="match status" value="1"/>
</dbReference>
<dbReference type="PANTHER" id="PTHR31760:SF0">
    <property type="entry name" value="S-ADENOSYL-L-METHIONINE-DEPENDENT METHYLTRANSFERASES SUPERFAMILY PROTEIN"/>
    <property type="match status" value="1"/>
</dbReference>
<dbReference type="Pfam" id="PF02527">
    <property type="entry name" value="GidB"/>
    <property type="match status" value="1"/>
</dbReference>
<dbReference type="PIRSF" id="PIRSF003078">
    <property type="entry name" value="GidB"/>
    <property type="match status" value="1"/>
</dbReference>
<dbReference type="SUPFAM" id="SSF53335">
    <property type="entry name" value="S-adenosyl-L-methionine-dependent methyltransferases"/>
    <property type="match status" value="1"/>
</dbReference>
<gene>
    <name evidence="1" type="primary">rsmG</name>
    <name type="ordered locus">Pden_0005</name>
</gene>
<sequence>MSVSRETERLATYAGLLRKWNPAINLIAASTIDQIEARHIADSLHLVEIAKNAQGSWVDLGSGGGLPGIVVAIMRPDLELSMVESDQRKGAFLRNAIRELALPHAKVLCKRIEALDRLDAANLSARALAPLPQLMAYVERHLSPSGTAWLMKGRNWQAEVSQAQSDWKFDLKTHQSATDPDAAILEITGLRHA</sequence>
<protein>
    <recommendedName>
        <fullName evidence="1">Ribosomal RNA small subunit methyltransferase G</fullName>
        <ecNumber evidence="1">2.1.1.170</ecNumber>
    </recommendedName>
    <alternativeName>
        <fullName evidence="1">16S rRNA 7-methylguanosine methyltransferase</fullName>
        <shortName evidence="1">16S rRNA m7G methyltransferase</shortName>
    </alternativeName>
</protein>
<evidence type="ECO:0000255" key="1">
    <source>
        <dbReference type="HAMAP-Rule" id="MF_00074"/>
    </source>
</evidence>